<gene>
    <name type="primary">KLHDC8B</name>
</gene>
<protein>
    <recommendedName>
        <fullName>Kelch domain-containing protein 8B</fullName>
    </recommendedName>
</protein>
<sequence>MATGGGRAFAWQVFPPMPTCRVYGTVAFQDGHLLVLGGCGRAGLPLDTAETLDMASHTWVALAPLPTARAGAAAVVLGKQVLVVGGVDEGQSPVAAVEAFLADEGRWERRATLPQAAMGVATVERDGMVYALGGMGPDTAPQAQVRVYEPRRDCWLSLPSMPTPCYGASTFLHGNKIYVLGGRQGKLPVTAFEAFDLEARTWTRHPSLPSRRAFAGCAMAEGSVFSLGGLQQPGPHNFYSRPHFVNTVEMFDLEHGSWTKLPRSLRMRDKRADFVVGSLGDHVVAIGGLGNQPCPLGSVEGFGLARRRWEALPAMPTARCSCSSLQAGPRLFAIGGVAQGPSQAVEALCLRDGV</sequence>
<organism>
    <name type="scientific">Bos taurus</name>
    <name type="common">Bovine</name>
    <dbReference type="NCBI Taxonomy" id="9913"/>
    <lineage>
        <taxon>Eukaryota</taxon>
        <taxon>Metazoa</taxon>
        <taxon>Chordata</taxon>
        <taxon>Craniata</taxon>
        <taxon>Vertebrata</taxon>
        <taxon>Euteleostomi</taxon>
        <taxon>Mammalia</taxon>
        <taxon>Eutheria</taxon>
        <taxon>Laurasiatheria</taxon>
        <taxon>Artiodactyla</taxon>
        <taxon>Ruminantia</taxon>
        <taxon>Pecora</taxon>
        <taxon>Bovidae</taxon>
        <taxon>Bovinae</taxon>
        <taxon>Bos</taxon>
    </lineage>
</organism>
<name>KLD8B_BOVIN</name>
<accession>Q5E9V5</accession>
<accession>Q0V8C3</accession>
<feature type="chain" id="PRO_0000119130" description="Kelch domain-containing protein 8B">
    <location>
        <begin position="1"/>
        <end position="354"/>
    </location>
</feature>
<feature type="repeat" description="Kelch 1">
    <location>
        <begin position="1"/>
        <end position="31"/>
    </location>
</feature>
<feature type="repeat" description="Kelch 2">
    <location>
        <begin position="32"/>
        <end position="79"/>
    </location>
</feature>
<feature type="repeat" description="Kelch 3">
    <location>
        <begin position="81"/>
        <end position="127"/>
    </location>
</feature>
<feature type="repeat" description="Kelch 4">
    <location>
        <begin position="128"/>
        <end position="175"/>
    </location>
</feature>
<feature type="repeat" description="Kelch 5">
    <location>
        <begin position="176"/>
        <end position="222"/>
    </location>
</feature>
<feature type="repeat" description="Kelch 6">
    <location>
        <begin position="224"/>
        <end position="281"/>
    </location>
</feature>
<feature type="repeat" description="Kelch 7">
    <location>
        <begin position="282"/>
        <end position="329"/>
    </location>
</feature>
<feature type="repeat" description="Kelch 8">
    <location>
        <begin position="331"/>
        <end position="354"/>
    </location>
</feature>
<feature type="sequence conflict" description="In Ref. 1; ABG81452." evidence="2" ref="1">
    <original>G</original>
    <variation>S</variation>
    <location>
        <position position="303"/>
    </location>
</feature>
<comment type="function">
    <text evidence="1">Involved in pinching off the separated nuclei at the cleavage furrow and in cytokinesis. Required for mitotic integrity and maintenance of chromosomal stability. Protects cells against mitotic errors, centrosomal amplification, micronucleus formation and aneuploidy. Plays a key role of midbody function involving abscission of the daughter cells during cytokinesis and appropriate chromosomal and nuclear segregation into the daughter cells.</text>
</comment>
<comment type="subcellular location">
    <subcellularLocation>
        <location evidence="1">Cytoplasm</location>
    </subcellularLocation>
    <subcellularLocation>
        <location evidence="1">Midbody</location>
    </subcellularLocation>
    <text evidence="1">In mitotic cells, concentrates in the midbody of the cytoplasmic bridge linking daughter cells as they are about to separate during cytokinesis.</text>
</comment>
<dbReference type="EMBL" id="BT020815">
    <property type="protein sequence ID" value="AAX08832.1"/>
    <property type="molecule type" value="mRNA"/>
</dbReference>
<dbReference type="EMBL" id="BT026296">
    <property type="protein sequence ID" value="ABG81452.1"/>
    <property type="molecule type" value="mRNA"/>
</dbReference>
<dbReference type="RefSeq" id="NP_001030447.2">
    <property type="nucleotide sequence ID" value="NM_001035370.2"/>
</dbReference>
<dbReference type="RefSeq" id="XP_015315070.1">
    <property type="nucleotide sequence ID" value="XM_015459584.1"/>
</dbReference>
<dbReference type="RefSeq" id="XP_015315071.1">
    <property type="nucleotide sequence ID" value="XM_015459585.1"/>
</dbReference>
<dbReference type="SMR" id="Q5E9V5"/>
<dbReference type="FunCoup" id="Q5E9V5">
    <property type="interactions" value="54"/>
</dbReference>
<dbReference type="STRING" id="9913.ENSBTAP00000001298"/>
<dbReference type="PaxDb" id="9913-ENSBTAP00000001298"/>
<dbReference type="GeneID" id="527321"/>
<dbReference type="KEGG" id="bta:527321"/>
<dbReference type="CTD" id="200942"/>
<dbReference type="eggNOG" id="KOG1072">
    <property type="taxonomic scope" value="Eukaryota"/>
</dbReference>
<dbReference type="HOGENOM" id="CLU_046864_0_0_1"/>
<dbReference type="InParanoid" id="Q5E9V5"/>
<dbReference type="OrthoDB" id="45365at2759"/>
<dbReference type="Proteomes" id="UP000009136">
    <property type="component" value="Unplaced"/>
</dbReference>
<dbReference type="GO" id="GO:0110070">
    <property type="term" value="C:cellularization cleavage furrow"/>
    <property type="evidence" value="ECO:0000250"/>
    <property type="project" value="UniProtKB"/>
</dbReference>
<dbReference type="GO" id="GO:0005737">
    <property type="term" value="C:cytoplasm"/>
    <property type="evidence" value="ECO:0000250"/>
    <property type="project" value="UniProtKB"/>
</dbReference>
<dbReference type="GO" id="GO:0045171">
    <property type="term" value="C:intercellular bridge"/>
    <property type="evidence" value="ECO:0000250"/>
    <property type="project" value="UniProtKB"/>
</dbReference>
<dbReference type="GO" id="GO:0030496">
    <property type="term" value="C:midbody"/>
    <property type="evidence" value="ECO:0000250"/>
    <property type="project" value="UniProtKB"/>
</dbReference>
<dbReference type="GO" id="GO:1902410">
    <property type="term" value="P:mitotic cytokinetic process"/>
    <property type="evidence" value="ECO:0000250"/>
    <property type="project" value="UniProtKB"/>
</dbReference>
<dbReference type="GO" id="GO:0140014">
    <property type="term" value="P:mitotic nuclear division"/>
    <property type="evidence" value="ECO:0000250"/>
    <property type="project" value="UniProtKB"/>
</dbReference>
<dbReference type="GO" id="GO:0098813">
    <property type="term" value="P:nuclear chromosome segregation"/>
    <property type="evidence" value="ECO:0000250"/>
    <property type="project" value="UniProtKB"/>
</dbReference>
<dbReference type="FunFam" id="2.120.10.80:FF:000053">
    <property type="entry name" value="Kelch domain-containing protein 8B"/>
    <property type="match status" value="1"/>
</dbReference>
<dbReference type="FunFam" id="2.120.10.80:FF:000066">
    <property type="entry name" value="Kelch domain-containing protein 8B"/>
    <property type="match status" value="1"/>
</dbReference>
<dbReference type="Gene3D" id="2.120.10.80">
    <property type="entry name" value="Kelch-type beta propeller"/>
    <property type="match status" value="2"/>
</dbReference>
<dbReference type="InterPro" id="IPR015915">
    <property type="entry name" value="Kelch-typ_b-propeller"/>
</dbReference>
<dbReference type="InterPro" id="IPR006652">
    <property type="entry name" value="Kelch_1"/>
</dbReference>
<dbReference type="InterPro" id="IPR051746">
    <property type="entry name" value="Kelch_domain_containing_8"/>
</dbReference>
<dbReference type="PANTHER" id="PTHR46260:SF2">
    <property type="entry name" value="KELCH DOMAIN-CONTAINING PROTEIN 8B"/>
    <property type="match status" value="1"/>
</dbReference>
<dbReference type="PANTHER" id="PTHR46260">
    <property type="entry name" value="RING-TYPE DOMAIN-CONTAINING PROTEIN"/>
    <property type="match status" value="1"/>
</dbReference>
<dbReference type="Pfam" id="PF01344">
    <property type="entry name" value="Kelch_1"/>
    <property type="match status" value="2"/>
</dbReference>
<dbReference type="Pfam" id="PF24681">
    <property type="entry name" value="Kelch_KLHDC2_KLHL20_DRC7"/>
    <property type="match status" value="1"/>
</dbReference>
<dbReference type="SMART" id="SM00612">
    <property type="entry name" value="Kelch"/>
    <property type="match status" value="6"/>
</dbReference>
<dbReference type="SUPFAM" id="SSF117281">
    <property type="entry name" value="Kelch motif"/>
    <property type="match status" value="2"/>
</dbReference>
<reference key="1">
    <citation type="journal article" date="2005" name="BMC Genomics">
        <title>Characterization of 954 bovine full-CDS cDNA sequences.</title>
        <authorList>
            <person name="Harhay G.P."/>
            <person name="Sonstegard T.S."/>
            <person name="Keele J.W."/>
            <person name="Heaton M.P."/>
            <person name="Clawson M.L."/>
            <person name="Snelling W.M."/>
            <person name="Wiedmann R.T."/>
            <person name="Van Tassell C.P."/>
            <person name="Smith T.P.L."/>
        </authorList>
    </citation>
    <scope>NUCLEOTIDE SEQUENCE [LARGE SCALE MRNA]</scope>
</reference>
<keyword id="KW-0131">Cell cycle</keyword>
<keyword id="KW-0132">Cell division</keyword>
<keyword id="KW-0963">Cytoplasm</keyword>
<keyword id="KW-0880">Kelch repeat</keyword>
<keyword id="KW-1185">Reference proteome</keyword>
<keyword id="KW-0677">Repeat</keyword>
<proteinExistence type="evidence at transcript level"/>
<evidence type="ECO:0000250" key="1">
    <source>
        <dbReference type="UniProtKB" id="Q8IXV7"/>
    </source>
</evidence>
<evidence type="ECO:0000305" key="2"/>